<reference key="1">
    <citation type="submission" date="2004-11" db="EMBL/GenBank/DDBJ databases">
        <authorList>
            <consortium name="The German cDNA consortium"/>
        </authorList>
    </citation>
    <scope>NUCLEOTIDE SEQUENCE [LARGE SCALE MRNA]</scope>
    <source>
        <tissue>Brain cortex</tissue>
    </source>
</reference>
<name>ORC4_PONAB</name>
<keyword id="KW-0067">ATP-binding</keyword>
<keyword id="KW-0235">DNA replication</keyword>
<keyword id="KW-0238">DNA-binding</keyword>
<keyword id="KW-0488">Methylation</keyword>
<keyword id="KW-0547">Nucleotide-binding</keyword>
<keyword id="KW-0539">Nucleus</keyword>
<keyword id="KW-1185">Reference proteome</keyword>
<feature type="chain" id="PRO_0000328610" description="Origin recognition complex subunit 4">
    <location>
        <begin position="1"/>
        <end position="436"/>
    </location>
</feature>
<feature type="binding site" evidence="4">
    <location>
        <begin position="67"/>
        <end position="74"/>
    </location>
    <ligand>
        <name>ATP</name>
        <dbReference type="ChEBI" id="CHEBI:30616"/>
    </ligand>
</feature>
<feature type="modified residue" description="N6-methyllysine" evidence="2">
    <location>
        <position position="7"/>
    </location>
</feature>
<accession>Q5R6Z7</accession>
<organism>
    <name type="scientific">Pongo abelii</name>
    <name type="common">Sumatran orangutan</name>
    <name type="synonym">Pongo pygmaeus abelii</name>
    <dbReference type="NCBI Taxonomy" id="9601"/>
    <lineage>
        <taxon>Eukaryota</taxon>
        <taxon>Metazoa</taxon>
        <taxon>Chordata</taxon>
        <taxon>Craniata</taxon>
        <taxon>Vertebrata</taxon>
        <taxon>Euteleostomi</taxon>
        <taxon>Mammalia</taxon>
        <taxon>Eutheria</taxon>
        <taxon>Euarchontoglires</taxon>
        <taxon>Primates</taxon>
        <taxon>Haplorrhini</taxon>
        <taxon>Catarrhini</taxon>
        <taxon>Hominidae</taxon>
        <taxon>Pongo</taxon>
    </lineage>
</organism>
<dbReference type="EMBL" id="CR860326">
    <property type="protein sequence ID" value="CAH92463.1"/>
    <property type="molecule type" value="mRNA"/>
</dbReference>
<dbReference type="RefSeq" id="NP_001126452.1">
    <property type="nucleotide sequence ID" value="NM_001132980.1"/>
</dbReference>
<dbReference type="RefSeq" id="XP_009235966.1">
    <property type="nucleotide sequence ID" value="XM_009237691.4"/>
</dbReference>
<dbReference type="RefSeq" id="XP_009235967.1">
    <property type="nucleotide sequence ID" value="XM_009237692.4"/>
</dbReference>
<dbReference type="RefSeq" id="XP_009235968.1">
    <property type="nucleotide sequence ID" value="XM_009237693.4"/>
</dbReference>
<dbReference type="RefSeq" id="XP_024098750.1">
    <property type="nucleotide sequence ID" value="XM_024242982.3"/>
</dbReference>
<dbReference type="RefSeq" id="XP_054404686.1">
    <property type="nucleotide sequence ID" value="XM_054548711.2"/>
</dbReference>
<dbReference type="RefSeq" id="XP_054404687.1">
    <property type="nucleotide sequence ID" value="XM_054548712.2"/>
</dbReference>
<dbReference type="RefSeq" id="XP_054404688.1">
    <property type="nucleotide sequence ID" value="XM_054548713.2"/>
</dbReference>
<dbReference type="RefSeq" id="XP_054404690.1">
    <property type="nucleotide sequence ID" value="XM_054548715.2"/>
</dbReference>
<dbReference type="RefSeq" id="XP_054404691.1">
    <property type="nucleotide sequence ID" value="XM_054548716.2"/>
</dbReference>
<dbReference type="RefSeq" id="XP_054404692.1">
    <property type="nucleotide sequence ID" value="XM_054548717.2"/>
</dbReference>
<dbReference type="RefSeq" id="XP_054404693.1">
    <property type="nucleotide sequence ID" value="XM_054548718.2"/>
</dbReference>
<dbReference type="RefSeq" id="XP_063568576.1">
    <property type="nucleotide sequence ID" value="XM_063712506.1"/>
</dbReference>
<dbReference type="RefSeq" id="XP_063568577.1">
    <property type="nucleotide sequence ID" value="XM_063712507.1"/>
</dbReference>
<dbReference type="RefSeq" id="XP_063568578.1">
    <property type="nucleotide sequence ID" value="XM_063712508.1"/>
</dbReference>
<dbReference type="RefSeq" id="XP_063568580.1">
    <property type="nucleotide sequence ID" value="XM_063712510.1"/>
</dbReference>
<dbReference type="RefSeq" id="XP_063568581.1">
    <property type="nucleotide sequence ID" value="XM_063712511.1"/>
</dbReference>
<dbReference type="SMR" id="Q5R6Z7"/>
<dbReference type="FunCoup" id="Q5R6Z7">
    <property type="interactions" value="3734"/>
</dbReference>
<dbReference type="STRING" id="9601.ENSPPYP00000014327"/>
<dbReference type="Ensembl" id="ENSPPYT00000014910.2">
    <property type="protein sequence ID" value="ENSPPYP00000014327.1"/>
    <property type="gene ID" value="ENSPPYG00000012835.2"/>
</dbReference>
<dbReference type="GeneID" id="100173438"/>
<dbReference type="KEGG" id="pon:100173438"/>
<dbReference type="CTD" id="5000"/>
<dbReference type="eggNOG" id="KOG2228">
    <property type="taxonomic scope" value="Eukaryota"/>
</dbReference>
<dbReference type="GeneTree" id="ENSGT00390000016542"/>
<dbReference type="HOGENOM" id="CLU_007115_0_1_1"/>
<dbReference type="InParanoid" id="Q5R6Z7"/>
<dbReference type="OMA" id="AFTFQRN"/>
<dbReference type="OrthoDB" id="343623at2759"/>
<dbReference type="TreeFam" id="TF101094"/>
<dbReference type="Proteomes" id="UP000001595">
    <property type="component" value="Chromosome 2B"/>
</dbReference>
<dbReference type="GO" id="GO:0000781">
    <property type="term" value="C:chromosome, telomeric region"/>
    <property type="evidence" value="ECO:0007669"/>
    <property type="project" value="Ensembl"/>
</dbReference>
<dbReference type="GO" id="GO:0005829">
    <property type="term" value="C:cytosol"/>
    <property type="evidence" value="ECO:0007669"/>
    <property type="project" value="Ensembl"/>
</dbReference>
<dbReference type="GO" id="GO:0005664">
    <property type="term" value="C:nuclear origin of replication recognition complex"/>
    <property type="evidence" value="ECO:0000250"/>
    <property type="project" value="UniProtKB"/>
</dbReference>
<dbReference type="GO" id="GO:0005730">
    <property type="term" value="C:nucleolus"/>
    <property type="evidence" value="ECO:0007669"/>
    <property type="project" value="Ensembl"/>
</dbReference>
<dbReference type="GO" id="GO:0005654">
    <property type="term" value="C:nucleoplasm"/>
    <property type="evidence" value="ECO:0007669"/>
    <property type="project" value="Ensembl"/>
</dbReference>
<dbReference type="GO" id="GO:0005634">
    <property type="term" value="C:nucleus"/>
    <property type="evidence" value="ECO:0000250"/>
    <property type="project" value="UniProtKB"/>
</dbReference>
<dbReference type="GO" id="GO:0005524">
    <property type="term" value="F:ATP binding"/>
    <property type="evidence" value="ECO:0007669"/>
    <property type="project" value="UniProtKB-KW"/>
</dbReference>
<dbReference type="GO" id="GO:0016887">
    <property type="term" value="F:ATP hydrolysis activity"/>
    <property type="evidence" value="ECO:0007669"/>
    <property type="project" value="InterPro"/>
</dbReference>
<dbReference type="GO" id="GO:0003688">
    <property type="term" value="F:DNA replication origin binding"/>
    <property type="evidence" value="ECO:0000250"/>
    <property type="project" value="UniProtKB"/>
</dbReference>
<dbReference type="GO" id="GO:0000166">
    <property type="term" value="F:nucleotide binding"/>
    <property type="evidence" value="ECO:0000250"/>
    <property type="project" value="UniProtKB"/>
</dbReference>
<dbReference type="GO" id="GO:0006270">
    <property type="term" value="P:DNA replication initiation"/>
    <property type="evidence" value="ECO:0000250"/>
    <property type="project" value="UniProtKB"/>
</dbReference>
<dbReference type="GO" id="GO:0040038">
    <property type="term" value="P:polar body extrusion after meiotic divisions"/>
    <property type="evidence" value="ECO:0007669"/>
    <property type="project" value="Ensembl"/>
</dbReference>
<dbReference type="GO" id="GO:0051258">
    <property type="term" value="P:protein polymerization"/>
    <property type="evidence" value="ECO:0007669"/>
    <property type="project" value="Ensembl"/>
</dbReference>
<dbReference type="CDD" id="cd00009">
    <property type="entry name" value="AAA"/>
    <property type="match status" value="1"/>
</dbReference>
<dbReference type="FunFam" id="3.40.50.300:FF:000649">
    <property type="entry name" value="Origin recognition complex subunit 4"/>
    <property type="match status" value="1"/>
</dbReference>
<dbReference type="Gene3D" id="3.40.50.300">
    <property type="entry name" value="P-loop containing nucleotide triphosphate hydrolases"/>
    <property type="match status" value="1"/>
</dbReference>
<dbReference type="InterPro" id="IPR003593">
    <property type="entry name" value="AAA+_ATPase"/>
</dbReference>
<dbReference type="InterPro" id="IPR041664">
    <property type="entry name" value="AAA_16"/>
</dbReference>
<dbReference type="InterPro" id="IPR016527">
    <property type="entry name" value="ORC4"/>
</dbReference>
<dbReference type="InterPro" id="IPR032705">
    <property type="entry name" value="ORC4_C"/>
</dbReference>
<dbReference type="InterPro" id="IPR027417">
    <property type="entry name" value="P-loop_NTPase"/>
</dbReference>
<dbReference type="PANTHER" id="PTHR12087">
    <property type="entry name" value="ORIGIN RECOGNITION COMPLEX SUBUNIT 4"/>
    <property type="match status" value="1"/>
</dbReference>
<dbReference type="PANTHER" id="PTHR12087:SF0">
    <property type="entry name" value="ORIGIN RECOGNITION COMPLEX SUBUNIT 4"/>
    <property type="match status" value="1"/>
</dbReference>
<dbReference type="Pfam" id="PF13191">
    <property type="entry name" value="AAA_16"/>
    <property type="match status" value="1"/>
</dbReference>
<dbReference type="Pfam" id="PF14629">
    <property type="entry name" value="ORC4_C"/>
    <property type="match status" value="1"/>
</dbReference>
<dbReference type="PIRSF" id="PIRSF007858">
    <property type="entry name" value="ORC4"/>
    <property type="match status" value="1"/>
</dbReference>
<dbReference type="SMART" id="SM00382">
    <property type="entry name" value="AAA"/>
    <property type="match status" value="1"/>
</dbReference>
<dbReference type="SUPFAM" id="SSF52540">
    <property type="entry name" value="P-loop containing nucleoside triphosphate hydrolases"/>
    <property type="match status" value="1"/>
</dbReference>
<protein>
    <recommendedName>
        <fullName>Origin recognition complex subunit 4</fullName>
    </recommendedName>
</protein>
<evidence type="ECO:0000250" key="1"/>
<evidence type="ECO:0000250" key="2">
    <source>
        <dbReference type="UniProtKB" id="O43929"/>
    </source>
</evidence>
<evidence type="ECO:0000250" key="3">
    <source>
        <dbReference type="UniProtKB" id="O88708"/>
    </source>
</evidence>
<evidence type="ECO:0000255" key="4"/>
<evidence type="ECO:0000305" key="5"/>
<comment type="function">
    <text evidence="1">Component of the origin recognition complex (ORC) that binds origins of replication. DNA-binding is ATP-dependent. The specific DNA sequences that define origins of replication have not been identified yet. ORC is required to assemble the pre-replication complex necessary to initiate DNA replication. Binds histone H3 and H4 trimethylation marks H3K9me3, H3K27me3 and H4K20me3 (By similarity).</text>
</comment>
<comment type="subunit">
    <text evidence="2 3">Component of ORC, a complex composed of at least 6 subunits: ORC1, ORC2, ORC3, ORC4, ORC5 and ORC6. ORC is regulated in a cell-cycle dependent manner. It is sequentially assembled at the exit from anaphase of mitosis and disassembled as cells enter S phase (By similarity). Interacts with DBF4 (By similarity). Interacts with POLQ (By similarity).</text>
</comment>
<comment type="subcellular location">
    <subcellularLocation>
        <location evidence="1">Nucleus</location>
    </subcellularLocation>
</comment>
<comment type="similarity">
    <text evidence="5">Belongs to the ORC4 family.</text>
</comment>
<proteinExistence type="evidence at transcript level"/>
<gene>
    <name type="primary">ORC4</name>
    <name type="synonym">ORC4L</name>
</gene>
<sequence>MSSRKSKNNSLIHTECLSQVQRILRERFCHQSPHSNLFGVQVQYKHLSELLKRTALHGESNSVLIIGPRGSGKTMLINHALKELMEIEEVSENVLQVHLNGLLQINDKIALKEITRQLNLENVVGDKVFGSFAENLSFLLEALKKGDRTSSCPVVFILDEFDLFAHHKNQTLLYNLFDISQSAQTPVAVIGLTCRLDILELLEKRVKSRFSHRQIHLMNSFGFPQYVKIFKEQLSLPAEFPDKVFAEKWNENVQYLSEDRSVQEVLQKHFNISKNLRSLHMLLMLALNRVTASHPFMTAVDLIEASQLCSMDSKANIVHGLSVLEICLIIAMKHLNDIYEEEPFNFQMVYNEFQKFVQRKAHSVYNFEKPVVMKAFEHLQQLELIKPMERTSGNSQREYQLMKLLLDNTQIMNALQKYPNCPTDVRQWATSSLSWL</sequence>